<accession>Q1C2D3</accession>
<protein>
    <recommendedName>
        <fullName evidence="1">Pantothenate kinase</fullName>
        <ecNumber evidence="1">2.7.1.33</ecNumber>
    </recommendedName>
    <alternativeName>
        <fullName evidence="1">Pantothenic acid kinase</fullName>
    </alternativeName>
</protein>
<keyword id="KW-0067">ATP-binding</keyword>
<keyword id="KW-0173">Coenzyme A biosynthesis</keyword>
<keyword id="KW-0963">Cytoplasm</keyword>
<keyword id="KW-0418">Kinase</keyword>
<keyword id="KW-0547">Nucleotide-binding</keyword>
<keyword id="KW-0808">Transferase</keyword>
<comment type="catalytic activity">
    <reaction evidence="1">
        <text>(R)-pantothenate + ATP = (R)-4'-phosphopantothenate + ADP + H(+)</text>
        <dbReference type="Rhea" id="RHEA:16373"/>
        <dbReference type="ChEBI" id="CHEBI:10986"/>
        <dbReference type="ChEBI" id="CHEBI:15378"/>
        <dbReference type="ChEBI" id="CHEBI:29032"/>
        <dbReference type="ChEBI" id="CHEBI:30616"/>
        <dbReference type="ChEBI" id="CHEBI:456216"/>
        <dbReference type="EC" id="2.7.1.33"/>
    </reaction>
</comment>
<comment type="pathway">
    <text evidence="1">Cofactor biosynthesis; coenzyme A biosynthesis; CoA from (R)-pantothenate: step 1/5.</text>
</comment>
<comment type="subcellular location">
    <subcellularLocation>
        <location evidence="1">Cytoplasm</location>
    </subcellularLocation>
</comment>
<comment type="similarity">
    <text evidence="1">Belongs to the prokaryotic pantothenate kinase family.</text>
</comment>
<sequence length="316" mass="36016">MTKREQSLATPYLQFDRTQWAALRDSVPLTLTEEEIVKLKGINEDLSLDEVAQIYLPLSRLLNFYISSNLRRQAVLEQFLGTDGQRIPYVIGIAGSVAVGKSTTARLLQALLSRWPEHRSVELITTDGFLHPNKVLNERGLMKKKGFPESYDMHNLVKFVSEVKSGADYVTAPVYSHLIYDVVPDGNKVIKQPDILILEGLNVLQSGMDYPHDPHHVFVSDFVDFSIYVDAPEDLLQSWYINRFLKFRQGAFSNPDSYFHNYAKLPETEAIKIATQLWNEINGLNLKQNILPTRERASLIMTKSANHAVESVRLRK</sequence>
<gene>
    <name evidence="1" type="primary">coaA</name>
    <name type="ordered locus">YPA_3427</name>
</gene>
<feature type="chain" id="PRO_1000043275" description="Pantothenate kinase">
    <location>
        <begin position="1"/>
        <end position="316"/>
    </location>
</feature>
<feature type="binding site" evidence="1">
    <location>
        <begin position="95"/>
        <end position="102"/>
    </location>
    <ligand>
        <name>ATP</name>
        <dbReference type="ChEBI" id="CHEBI:30616"/>
    </ligand>
</feature>
<proteinExistence type="inferred from homology"/>
<dbReference type="EC" id="2.7.1.33" evidence="1"/>
<dbReference type="EMBL" id="CP000308">
    <property type="protein sequence ID" value="ABG15389.1"/>
    <property type="molecule type" value="Genomic_DNA"/>
</dbReference>
<dbReference type="RefSeq" id="WP_002212290.1">
    <property type="nucleotide sequence ID" value="NZ_CP009906.1"/>
</dbReference>
<dbReference type="SMR" id="Q1C2D3"/>
<dbReference type="GeneID" id="57974956"/>
<dbReference type="KEGG" id="ypa:YPA_3427"/>
<dbReference type="UniPathway" id="UPA00241">
    <property type="reaction ID" value="UER00352"/>
</dbReference>
<dbReference type="Proteomes" id="UP000001971">
    <property type="component" value="Chromosome"/>
</dbReference>
<dbReference type="GO" id="GO:0005737">
    <property type="term" value="C:cytoplasm"/>
    <property type="evidence" value="ECO:0007669"/>
    <property type="project" value="UniProtKB-SubCell"/>
</dbReference>
<dbReference type="GO" id="GO:0005524">
    <property type="term" value="F:ATP binding"/>
    <property type="evidence" value="ECO:0007669"/>
    <property type="project" value="UniProtKB-UniRule"/>
</dbReference>
<dbReference type="GO" id="GO:0004594">
    <property type="term" value="F:pantothenate kinase activity"/>
    <property type="evidence" value="ECO:0007669"/>
    <property type="project" value="UniProtKB-UniRule"/>
</dbReference>
<dbReference type="GO" id="GO:0015937">
    <property type="term" value="P:coenzyme A biosynthetic process"/>
    <property type="evidence" value="ECO:0007669"/>
    <property type="project" value="UniProtKB-UniRule"/>
</dbReference>
<dbReference type="CDD" id="cd02025">
    <property type="entry name" value="PanK"/>
    <property type="match status" value="1"/>
</dbReference>
<dbReference type="FunFam" id="3.40.50.300:FF:000242">
    <property type="entry name" value="Pantothenate kinase"/>
    <property type="match status" value="1"/>
</dbReference>
<dbReference type="Gene3D" id="3.40.50.300">
    <property type="entry name" value="P-loop containing nucleotide triphosphate hydrolases"/>
    <property type="match status" value="1"/>
</dbReference>
<dbReference type="HAMAP" id="MF_00215">
    <property type="entry name" value="Pantothen_kinase_1"/>
    <property type="match status" value="1"/>
</dbReference>
<dbReference type="InterPro" id="IPR027417">
    <property type="entry name" value="P-loop_NTPase"/>
</dbReference>
<dbReference type="InterPro" id="IPR004566">
    <property type="entry name" value="PanK"/>
</dbReference>
<dbReference type="InterPro" id="IPR006083">
    <property type="entry name" value="PRK/URK"/>
</dbReference>
<dbReference type="NCBIfam" id="TIGR00554">
    <property type="entry name" value="panK_bact"/>
    <property type="match status" value="1"/>
</dbReference>
<dbReference type="PANTHER" id="PTHR10285">
    <property type="entry name" value="URIDINE KINASE"/>
    <property type="match status" value="1"/>
</dbReference>
<dbReference type="Pfam" id="PF00485">
    <property type="entry name" value="PRK"/>
    <property type="match status" value="1"/>
</dbReference>
<dbReference type="PIRSF" id="PIRSF000545">
    <property type="entry name" value="Pantothenate_kin"/>
    <property type="match status" value="1"/>
</dbReference>
<dbReference type="SUPFAM" id="SSF52540">
    <property type="entry name" value="P-loop containing nucleoside triphosphate hydrolases"/>
    <property type="match status" value="1"/>
</dbReference>
<evidence type="ECO:0000255" key="1">
    <source>
        <dbReference type="HAMAP-Rule" id="MF_00215"/>
    </source>
</evidence>
<reference key="1">
    <citation type="journal article" date="2006" name="J. Bacteriol.">
        <title>Complete genome sequence of Yersinia pestis strains Antiqua and Nepal516: evidence of gene reduction in an emerging pathogen.</title>
        <authorList>
            <person name="Chain P.S.G."/>
            <person name="Hu P."/>
            <person name="Malfatti S.A."/>
            <person name="Radnedge L."/>
            <person name="Larimer F."/>
            <person name="Vergez L.M."/>
            <person name="Worsham P."/>
            <person name="Chu M.C."/>
            <person name="Andersen G.L."/>
        </authorList>
    </citation>
    <scope>NUCLEOTIDE SEQUENCE [LARGE SCALE GENOMIC DNA]</scope>
    <source>
        <strain>Antiqua</strain>
    </source>
</reference>
<organism>
    <name type="scientific">Yersinia pestis bv. Antiqua (strain Antiqua)</name>
    <dbReference type="NCBI Taxonomy" id="360102"/>
    <lineage>
        <taxon>Bacteria</taxon>
        <taxon>Pseudomonadati</taxon>
        <taxon>Pseudomonadota</taxon>
        <taxon>Gammaproteobacteria</taxon>
        <taxon>Enterobacterales</taxon>
        <taxon>Yersiniaceae</taxon>
        <taxon>Yersinia</taxon>
    </lineage>
</organism>
<name>COAA_YERPA</name>